<accession>Q8QGR0</accession>
<accession>P80970</accession>
<accession>Q9PRZ5</accession>
<keyword id="KW-0002">3D-structure</keyword>
<keyword id="KW-0903">Direct protein sequencing</keyword>
<keyword id="KW-1015">Disulfide bond</keyword>
<keyword id="KW-1214">G-protein coupled acetylcholine receptor impairing toxin</keyword>
<keyword id="KW-1213">G-protein coupled receptor impairing toxin</keyword>
<keyword id="KW-0528">Neurotoxin</keyword>
<keyword id="KW-0629">Postsynaptic neurotoxin</keyword>
<keyword id="KW-0964">Secreted</keyword>
<keyword id="KW-0732">Signal</keyword>
<keyword id="KW-0800">Toxin</keyword>
<dbReference type="EMBL" id="AF241871">
    <property type="protein sequence ID" value="AAM00185.1"/>
    <property type="molecule type" value="mRNA"/>
</dbReference>
<dbReference type="PDB" id="2VLW">
    <property type="method" value="X-ray"/>
    <property type="resolution" value="1.39 A"/>
    <property type="chains" value="A/B=22-86"/>
</dbReference>
<dbReference type="PDB" id="3FEV">
    <property type="method" value="X-ray"/>
    <property type="resolution" value="1.30 A"/>
    <property type="chains" value="A/B/C=38-86"/>
</dbReference>
<dbReference type="PDB" id="3NEQ">
    <property type="method" value="X-ray"/>
    <property type="resolution" value="1.25 A"/>
    <property type="chains" value="A/B=22-69, A/B=78-86"/>
</dbReference>
<dbReference type="PDB" id="6WJC">
    <property type="method" value="X-ray"/>
    <property type="resolution" value="2.55 A"/>
    <property type="chains" value="C=22-86"/>
</dbReference>
<dbReference type="PDBsum" id="2VLW"/>
<dbReference type="PDBsum" id="3FEV"/>
<dbReference type="PDBsum" id="3NEQ"/>
<dbReference type="PDBsum" id="6WJC"/>
<dbReference type="SMR" id="Q8QGR0"/>
<dbReference type="TCDB" id="1.C.74.1.8">
    <property type="family name" value="the snake cytotoxin (sct) family"/>
</dbReference>
<dbReference type="EvolutionaryTrace" id="Q8QGR0"/>
<dbReference type="GO" id="GO:0005576">
    <property type="term" value="C:extracellular region"/>
    <property type="evidence" value="ECO:0007669"/>
    <property type="project" value="UniProtKB-SubCell"/>
</dbReference>
<dbReference type="GO" id="GO:0048019">
    <property type="term" value="F:receptor antagonist activity"/>
    <property type="evidence" value="ECO:0000314"/>
    <property type="project" value="UniProtKB"/>
</dbReference>
<dbReference type="GO" id="GO:0090729">
    <property type="term" value="F:toxin activity"/>
    <property type="evidence" value="ECO:0007669"/>
    <property type="project" value="UniProtKB-KW"/>
</dbReference>
<dbReference type="CDD" id="cd00206">
    <property type="entry name" value="TFP_snake_toxin"/>
    <property type="match status" value="1"/>
</dbReference>
<dbReference type="FunFam" id="2.10.60.10:FF:000024">
    <property type="entry name" value="Cytotoxin 1"/>
    <property type="match status" value="1"/>
</dbReference>
<dbReference type="Gene3D" id="2.10.60.10">
    <property type="entry name" value="CD59"/>
    <property type="match status" value="1"/>
</dbReference>
<dbReference type="InterPro" id="IPR003571">
    <property type="entry name" value="Snake_3FTx"/>
</dbReference>
<dbReference type="InterPro" id="IPR045860">
    <property type="entry name" value="Snake_toxin-like_sf"/>
</dbReference>
<dbReference type="InterPro" id="IPR018354">
    <property type="entry name" value="Snake_toxin_con_site"/>
</dbReference>
<dbReference type="InterPro" id="IPR054131">
    <property type="entry name" value="Toxin_cobra-type"/>
</dbReference>
<dbReference type="Pfam" id="PF21947">
    <property type="entry name" value="Toxin_cobra-type"/>
    <property type="match status" value="1"/>
</dbReference>
<dbReference type="SUPFAM" id="SSF57302">
    <property type="entry name" value="Snake toxin-like"/>
    <property type="match status" value="1"/>
</dbReference>
<dbReference type="PROSITE" id="PS00272">
    <property type="entry name" value="SNAKE_TOXIN"/>
    <property type="match status" value="1"/>
</dbReference>
<proteinExistence type="evidence at protein level"/>
<sequence>MKTLLLTLVVVTIVCLDLGYTLTCVKSNSIWFPTSEDCPDGQNLCFKRWQYISPRMYDFTRGCAATCPKAEYRDVINCCGTDKCNK</sequence>
<evidence type="ECO:0000269" key="1">
    <source>
    </source>
</evidence>
<evidence type="ECO:0000269" key="2">
    <source>
    </source>
</evidence>
<evidence type="ECO:0000269" key="3">
    <source>
    </source>
</evidence>
<evidence type="ECO:0000269" key="4">
    <source>
    </source>
</evidence>
<evidence type="ECO:0000269" key="5">
    <source>
    </source>
</evidence>
<evidence type="ECO:0000269" key="6">
    <source>
    </source>
</evidence>
<evidence type="ECO:0000269" key="7">
    <source>
    </source>
</evidence>
<evidence type="ECO:0000269" key="8">
    <source>
    </source>
</evidence>
<evidence type="ECO:0000269" key="9">
    <source>
    </source>
</evidence>
<evidence type="ECO:0000269" key="10">
    <source>
    </source>
</evidence>
<evidence type="ECO:0000269" key="11">
    <source>
    </source>
</evidence>
<evidence type="ECO:0000303" key="12">
    <source>
    </source>
</evidence>
<evidence type="ECO:0000303" key="13">
    <source>
    </source>
</evidence>
<evidence type="ECO:0000303" key="14">
    <source>
    </source>
</evidence>
<evidence type="ECO:0000305" key="15"/>
<evidence type="ECO:0000305" key="16">
    <source>
    </source>
</evidence>
<evidence type="ECO:0000305" key="17">
    <source>
    </source>
</evidence>
<evidence type="ECO:0000312" key="18">
    <source>
        <dbReference type="PDB" id="2VLW"/>
    </source>
</evidence>
<evidence type="ECO:0000312" key="19">
    <source>
        <dbReference type="PDB" id="3FEV"/>
    </source>
</evidence>
<evidence type="ECO:0000312" key="20">
    <source>
        <dbReference type="PDB" id="3NEQ"/>
    </source>
</evidence>
<evidence type="ECO:0000312" key="21">
    <source>
        <dbReference type="PDB" id="6WJC"/>
    </source>
</evidence>
<evidence type="ECO:0007744" key="22">
    <source>
        <dbReference type="PDB" id="2VLW"/>
    </source>
</evidence>
<evidence type="ECO:0007744" key="23">
    <source>
        <dbReference type="PDB" id="3FEV"/>
    </source>
</evidence>
<evidence type="ECO:0007744" key="24">
    <source>
        <dbReference type="PDB" id="3NEQ"/>
    </source>
</evidence>
<evidence type="ECO:0007744" key="25">
    <source>
        <dbReference type="PDB" id="6WJC"/>
    </source>
</evidence>
<evidence type="ECO:0007829" key="26">
    <source>
        <dbReference type="PDB" id="3FEV"/>
    </source>
</evidence>
<evidence type="ECO:0007829" key="27">
    <source>
        <dbReference type="PDB" id="3NEQ"/>
    </source>
</evidence>
<reference key="1">
    <citation type="journal article" date="2001" name="Mol. Pharmacol.">
        <title>Site-directed mutagenesis of m1-toxin1: two amino acids responsible for stable toxin binding to m1 muscarinic receptors.</title>
        <authorList>
            <person name="Krajewski J.L."/>
            <person name="Dickerson I.M."/>
            <person name="Potter L.T."/>
        </authorList>
    </citation>
    <scope>NUCLEOTIDE SEQUENCE [MRNA]</scope>
    <scope>FUNCTION</scope>
    <scope>MASS SPECTROMETRY</scope>
    <scope>MUTAGENESIS OF PHE-59 AND LYS-86</scope>
    <source>
        <tissue>Venom gland</tissue>
    </source>
</reference>
<reference key="2">
    <citation type="journal article" date="1993" name="J. Neurosci.">
        <title>Purification and properties of m1-toxin, a specific antagonist of m1 muscarinic receptors.</title>
        <authorList>
            <person name="Max S.I."/>
            <person name="Liang J.-S."/>
            <person name="Potter L.T."/>
        </authorList>
    </citation>
    <scope>PROTEIN SEQUENCE OF 22-85</scope>
    <scope>SUBCELLULAR LOCATION</scope>
    <source>
        <tissue>Venom</tissue>
    </source>
</reference>
<reference key="3">
    <citation type="journal article" date="2000" name="Biochem. Biophys. Res. Commun.">
        <title>Recombinant expression of a selective blocker of m1 muscarinic receptors.</title>
        <authorList>
            <person name="Naesman J."/>
            <person name="Jolkkonen M."/>
            <person name="Ammoun S."/>
            <person name="Karlsson E."/>
            <person name="Aakerman K.E.O."/>
        </authorList>
    </citation>
    <scope>PROTEIN SEQUENCE OF 22-86</scope>
    <scope>FUNCTION</scope>
    <source>
        <tissue>Venom</tissue>
    </source>
</reference>
<reference key="4">
    <citation type="journal article" date="2000" name="Toxicon">
        <title>M1-toxin isotoxins from the green mamba (Dendroaspis angusticeps) that selectively block m1 muscarinic receptors.</title>
        <authorList>
            <person name="Carsi J.M."/>
            <person name="Potter L.T."/>
        </authorList>
    </citation>
    <scope>PROTEIN SEQUENCE OF 22-86</scope>
    <source>
        <tissue>Venom</tissue>
    </source>
</reference>
<reference key="5">
    <citation type="journal article" date="2003" name="Mol. Pharmacol.">
        <title>Chemical synthesis of MT1 and MT7 muscarinic toxins: critical role of Arg-34 in their interaction with M1 muscarinic receptor.</title>
        <authorList>
            <person name="Mourier G."/>
            <person name="Dutertre S."/>
            <person name="Fruchart-Gaillard C."/>
            <person name="Menez A."/>
            <person name="Servent D."/>
        </authorList>
    </citation>
    <scope>SYNTHESIS OF 22-86</scope>
    <scope>MUTAGENESIS OF ARG-55</scope>
    <scope>FUNCTION</scope>
</reference>
<reference key="6">
    <citation type="journal article" date="2004" name="Eur. J. Pharmacol.">
        <title>Action of the muscarinic toxin MT7 on agonist-bound muscarinic M1 receptors.</title>
        <authorList>
            <person name="Olianas M.C."/>
            <person name="Adem A."/>
            <person name="Karlsson E."/>
            <person name="Onali P."/>
        </authorList>
    </citation>
    <scope>FUNCTION</scope>
</reference>
<reference key="7">
    <citation type="journal article" date="2011" name="Br. J. Pharmacol.">
        <title>Adrenoceptor activity of muscarinic toxins identified from mamba venoms.</title>
        <authorList>
            <person name="Naereoja K."/>
            <person name="Kukkonen J.P."/>
            <person name="Rondinelli S."/>
            <person name="Toivola D.M."/>
            <person name="Meriluoto J."/>
            <person name="Naesman J."/>
        </authorList>
    </citation>
    <scope>FUNCTION</scope>
</reference>
<reference key="8">
    <citation type="journal article" date="2014" name="Biochimie">
        <title>Polypharmacology profiles and phylogenetic analysis of three-finger toxins from mamba venom: case of aminergic toxins.</title>
        <authorList>
            <person name="Blanchet G."/>
            <person name="Collet G."/>
            <person name="Mourier G."/>
            <person name="Gilles N."/>
            <person name="Fruchart-Gaillard C."/>
            <person name="Marcon E."/>
            <person name="Servent D."/>
        </authorList>
    </citation>
    <scope>SYNTHESIS OF 22-86</scope>
</reference>
<reference evidence="18" key="9">
    <citation type="journal article" date="2008" name="Mol. Pharmacol.">
        <title>Different interactions between MT7 toxin and the human muscarinic M1 receptor in its free and N-methylscopolamine-occupied states.</title>
        <authorList>
            <person name="Fruchart-Gaillard C."/>
            <person name="Mourier G."/>
            <person name="Marquer C."/>
            <person name="Stura E."/>
            <person name="Birdsall N.J."/>
            <person name="Servent D."/>
        </authorList>
    </citation>
    <scope>X-RAY CRYSTALLOGRAPHY (1.39 ANGSTROMS) OF 22-86</scope>
    <scope>DISULFIDE BONDS</scope>
</reference>
<reference evidence="19 20" key="10">
    <citation type="journal article" date="2012" name="PLoS ONE">
        <title>Engineering of three-finger fold toxins creates ligands with original pharmacological profiles for muscarinic and adrenergic receptors.</title>
        <authorList>
            <person name="Fruchart-Gaillard C."/>
            <person name="Mourier G."/>
            <person name="Blanchet G."/>
            <person name="Vera L."/>
            <person name="Gilles N."/>
            <person name="Menez R."/>
            <person name="Marcon E."/>
            <person name="Stura E.A."/>
            <person name="Servent D."/>
        </authorList>
    </citation>
    <scope>X-RAY CRYSTALLOGRAPHY (1.25 ANGSTROMS) OF 22-86</scope>
</reference>
<reference evidence="21" key="11">
    <citation type="journal article" date="2020" name="Science">
        <title>Structure and selectivity engineering of the M1 muscarinic receptor toxin complex.</title>
        <authorList>
            <person name="Maeda S."/>
            <person name="Xu J."/>
            <person name="Kadji F.M.N."/>
            <person name="Clark M.J."/>
            <person name="Zhao J."/>
            <person name="Tsutsumi N."/>
            <person name="Aoki J."/>
            <person name="Sunahara R.K."/>
            <person name="Inoue A."/>
            <person name="Garcia K.C."/>
            <person name="Kobilka B.K."/>
        </authorList>
    </citation>
    <scope>X-RAY CRYSTALLOGRAPHY (2.55 ANGSTROMS) OF 22-86 IN COMPLEX WITH MUSCARINIC ACETYLCHOLINE M1 RECEPTOR</scope>
    <scope>DISULFIDE BONDS</scope>
    <scope>MUTAGENESIS OF TRP-31; GLU-36; 51-TYR--GLY-62 AND 71-GLU--VAL-75</scope>
</reference>
<feature type="signal peptide" evidence="1 2 11">
    <location>
        <begin position="1"/>
        <end position="21"/>
    </location>
</feature>
<feature type="chain" id="PRO_0000035481" description="Muscarinic toxin 7" evidence="1 2 11">
    <location>
        <begin position="22"/>
        <end position="86"/>
    </location>
</feature>
<feature type="region of interest" description="Finger loop 1" evidence="17">
    <location>
        <begin position="23"/>
        <end position="37"/>
    </location>
</feature>
<feature type="region of interest" description="Finger loop 2" evidence="17">
    <location>
        <begin position="44"/>
        <end position="63"/>
    </location>
</feature>
<feature type="region of interest" description="Finger loop 3" evidence="17">
    <location>
        <begin position="66"/>
        <end position="78"/>
    </location>
</feature>
<feature type="disulfide bond" evidence="6 8 10 22 23 24 25">
    <location>
        <begin position="24"/>
        <end position="45"/>
    </location>
</feature>
<feature type="disulfide bond" evidence="6 8 10 22 23 24 25">
    <location>
        <begin position="38"/>
        <end position="63"/>
    </location>
</feature>
<feature type="disulfide bond" evidence="6 8 10 22 23 24 25">
    <location>
        <begin position="67"/>
        <end position="78"/>
    </location>
</feature>
<feature type="disulfide bond" evidence="6 8 10 22 23 24 25">
    <location>
        <begin position="79"/>
        <end position="84"/>
    </location>
</feature>
<feature type="mutagenesis site" description="In Tx24; change in selectivity from CHRM1 to CHRM2; when associated with G-36; 51-S--V-62 and 71-P--D-75." evidence="10">
    <original>W</original>
    <variation>R</variation>
    <location>
        <position position="31"/>
    </location>
</feature>
<feature type="mutagenesis site" description="In Tx24; change in selectivity from CHRM1 to CHRM2; when associated with R-31; 51-S--V-62 and 71-P--D-75." evidence="10">
    <original>E</original>
    <variation>G</variation>
    <location>
        <position position="36"/>
    </location>
</feature>
<feature type="mutagenesis site" description="In Tx24; change in selectivity from CHRM1 to CHRM2; when associated with R-31; G-36 and 71-P--D-75." evidence="10">
    <original>YISPRMYDFTRG</original>
    <variation>SPGMPRPMWALV</variation>
    <location>
        <begin position="51"/>
        <end position="62"/>
    </location>
</feature>
<feature type="mutagenesis site" description="105-fold decrease in affinity to CHRM1 and change from irreversible to reversible binding." evidence="4">
    <original>R</original>
    <variation>A</variation>
    <location>
        <position position="55"/>
    </location>
</feature>
<feature type="mutagenesis site" description="Decrease in affinity to CHRM1 and change from irreversible to reversible binding." evidence="3">
    <original>F</original>
    <variation>I</variation>
    <location>
        <position position="59"/>
    </location>
</feature>
<feature type="mutagenesis site" description="In Tx24; change in selectivity from CHRM1 to CHRM2; when associated with R-31; G-36 and 51-S--V-62." evidence="10">
    <original>EYRDV</original>
    <variation>PPNED</variation>
    <location>
        <begin position="71"/>
        <end position="75"/>
    </location>
</feature>
<feature type="mutagenesis site" description="Decrease in affinity to M1 muscarinic acetylcholine receptors." evidence="3">
    <original>K</original>
    <variation>E</variation>
    <location>
        <position position="86"/>
    </location>
</feature>
<feature type="sequence conflict" description="In Ref. 2; AA sequence." evidence="15" ref="2">
    <original>WQ</original>
    <variation>HW</variation>
    <location>
        <begin position="49"/>
        <end position="50"/>
    </location>
</feature>
<feature type="strand" evidence="27">
    <location>
        <begin position="23"/>
        <end position="27"/>
    </location>
</feature>
<feature type="strand" evidence="27">
    <location>
        <begin position="29"/>
        <end position="31"/>
    </location>
</feature>
<feature type="strand" evidence="27">
    <location>
        <begin position="34"/>
        <end position="37"/>
    </location>
</feature>
<feature type="strand" evidence="27">
    <location>
        <begin position="44"/>
        <end position="53"/>
    </location>
</feature>
<feature type="strand" evidence="27">
    <location>
        <begin position="56"/>
        <end position="66"/>
    </location>
</feature>
<feature type="strand" evidence="26">
    <location>
        <begin position="75"/>
        <end position="79"/>
    </location>
</feature>
<feature type="turn" evidence="27">
    <location>
        <begin position="82"/>
        <end position="85"/>
    </location>
</feature>
<protein>
    <recommendedName>
        <fullName evidence="12 13">Muscarinic toxin 7</fullName>
        <shortName>MT-7</shortName>
        <shortName evidence="12 13">MT7</shortName>
    </recommendedName>
    <alternativeName>
        <fullName evidence="14">Muscarinic toxin 1</fullName>
        <shortName evidence="14">m1-toxin</shortName>
    </alternativeName>
</protein>
<organism>
    <name type="scientific">Dendroaspis angusticeps</name>
    <name type="common">Eastern green mamba</name>
    <name type="synonym">Naja angusticeps</name>
    <dbReference type="NCBI Taxonomy" id="8618"/>
    <lineage>
        <taxon>Eukaryota</taxon>
        <taxon>Metazoa</taxon>
        <taxon>Chordata</taxon>
        <taxon>Craniata</taxon>
        <taxon>Vertebrata</taxon>
        <taxon>Euteleostomi</taxon>
        <taxon>Lepidosauria</taxon>
        <taxon>Squamata</taxon>
        <taxon>Bifurcata</taxon>
        <taxon>Unidentata</taxon>
        <taxon>Episquamata</taxon>
        <taxon>Toxicofera</taxon>
        <taxon>Serpentes</taxon>
        <taxon>Colubroidea</taxon>
        <taxon>Elapidae</taxon>
        <taxon>Elapinae</taxon>
        <taxon>Dendroaspis</taxon>
    </lineage>
</organism>
<name>3SIM7_DENAN</name>
<comment type="function">
    <text evidence="2 3 4 5 7 15">Binds specifically and irreversibly to an allosteric site of the muscarinic acetylcholine M1 receptor (CHRM1) at subnanomolar concentrations and shows a very slow dissociation rate (PubMed:10799315, PubMed:11562434, PubMed:12488533, PubMed:21557730). It also inhibits agonist-mediated guanosine 5'-O-(3'-thiotriphosphate) (GTP-g-S) binding and downstream signaling, and decreases the dissociation rate of orthosteric antagonists (N-methylscopolamine (NMS) or pirenzepine) (PubMed:10799315, PubMed:15033377). Is a potent negative allosteric modulator (NAM) for CHRM1 activation and a positive allosteric modulator (PAM) for antagonist binding (Probable).</text>
</comment>
<comment type="subcellular location">
    <subcellularLocation>
        <location evidence="11">Secreted</location>
    </subcellularLocation>
</comment>
<comment type="tissue specificity">
    <text evidence="15">Expressed by the venom gland.</text>
</comment>
<comment type="domain">
    <text evidence="10">The finger loop 2 blocks access to the orthosteric site of the muscarinic acetylcholine M1 receptor. Comparison of MT7 alone and MT7 in complex with CHRM1 shows that finger loops 1 and 3 undergo large structural rearrangements upon binding to CHRM1, facilitating extensive interactions with the receptor, while finger loop 2 is mostly unchanged.</text>
</comment>
<comment type="mass spectrometry"/>
<comment type="miscellaneous">
    <text evidence="4 7 9">Negative results: does not show interaction with adrenergic receptors (ADRA1A, ADRA1B, ADRA1D, ADRA2A, ADRA2B, ADRA2C, ADRB1, ADRB2), dopaminergic receptors (DRD1, DRD2, DRD3, DRD4, DRD5), histaminic receptors (HRH1, HRH3, HRH4) and serotoninergic receptors (HTR1A, HTR2A, HTR2B, HTR2C, HTR5A, HTR6, HTR7) (PubMed:21557730, PubMed:24793485). Does not show interaction with muscarinic receptors (CHRM2, CHRM3, CHRM4, CHRM5) (PubMed:12488533, PubMed:24793485).</text>
</comment>
<comment type="miscellaneous">
    <text evidence="15">Is classified as a P-type cytotoxin, since a proline residue stands at position 54 (Pro-31 in standard classification).</text>
</comment>
<comment type="similarity">
    <text evidence="16">Belongs to the three-finger toxin family. Short-chain subfamily. Aminergic toxin sub-subfamily.</text>
</comment>